<feature type="signal peptide" evidence="1">
    <location>
        <begin position="1"/>
        <end position="17"/>
    </location>
</feature>
<feature type="chain" id="PRO_0000239664" description="Integral membrane protein GPR180">
    <location>
        <begin position="18"/>
        <end position="435"/>
    </location>
</feature>
<feature type="transmembrane region" description="Helical" evidence="1">
    <location>
        <begin position="168"/>
        <end position="188"/>
    </location>
</feature>
<feature type="transmembrane region" description="Helical" evidence="1">
    <location>
        <begin position="200"/>
        <end position="220"/>
    </location>
</feature>
<feature type="transmembrane region" description="Helical" evidence="1">
    <location>
        <begin position="244"/>
        <end position="264"/>
    </location>
</feature>
<feature type="transmembrane region" description="Helical" evidence="1">
    <location>
        <begin position="282"/>
        <end position="302"/>
    </location>
</feature>
<feature type="transmembrane region" description="Helical" evidence="1">
    <location>
        <begin position="320"/>
        <end position="340"/>
    </location>
</feature>
<feature type="transmembrane region" description="Helical" evidence="1">
    <location>
        <begin position="355"/>
        <end position="375"/>
    </location>
</feature>
<feature type="transmembrane region" description="Helical" evidence="1">
    <location>
        <begin position="384"/>
        <end position="404"/>
    </location>
</feature>
<feature type="glycosylation site" description="N-linked (GlcNAc...) asparagine" evidence="1">
    <location>
        <position position="100"/>
    </location>
</feature>
<feature type="glycosylation site" description="N-linked (GlcNAc...) asparagine" evidence="1">
    <location>
        <position position="105"/>
    </location>
</feature>
<evidence type="ECO:0000255" key="1"/>
<evidence type="ECO:0000305" key="2"/>
<organism>
    <name type="scientific">Xenopus laevis</name>
    <name type="common">African clawed frog</name>
    <dbReference type="NCBI Taxonomy" id="8355"/>
    <lineage>
        <taxon>Eukaryota</taxon>
        <taxon>Metazoa</taxon>
        <taxon>Chordata</taxon>
        <taxon>Craniata</taxon>
        <taxon>Vertebrata</taxon>
        <taxon>Euteleostomi</taxon>
        <taxon>Amphibia</taxon>
        <taxon>Batrachia</taxon>
        <taxon>Anura</taxon>
        <taxon>Pipoidea</taxon>
        <taxon>Pipidae</taxon>
        <taxon>Xenopodinae</taxon>
        <taxon>Xenopus</taxon>
        <taxon>Xenopus</taxon>
    </lineage>
</organism>
<comment type="subcellular location">
    <subcellularLocation>
        <location evidence="2">Membrane</location>
        <topology evidence="2">Multi-pass membrane protein</topology>
    </subcellularLocation>
</comment>
<accession>Q5FWM8</accession>
<reference key="1">
    <citation type="submission" date="2005-01" db="EMBL/GenBank/DDBJ databases">
        <authorList>
            <consortium name="NIH - Xenopus Gene Collection (XGC) project"/>
        </authorList>
    </citation>
    <scope>NUCLEOTIDE SEQUENCE [LARGE SCALE MRNA]</scope>
    <source>
        <tissue>Egg</tissue>
    </source>
</reference>
<gene>
    <name type="primary">gpr180</name>
</gene>
<protein>
    <recommendedName>
        <fullName>Integral membrane protein GPR180</fullName>
    </recommendedName>
</protein>
<dbReference type="EMBL" id="BC089278">
    <property type="protein sequence ID" value="AAH89278.1"/>
    <property type="molecule type" value="mRNA"/>
</dbReference>
<dbReference type="RefSeq" id="NP_001089985.1">
    <property type="nucleotide sequence ID" value="NM_001096516.1"/>
</dbReference>
<dbReference type="SMR" id="Q5FWM8"/>
<dbReference type="GlyCosmos" id="Q5FWM8">
    <property type="glycosylation" value="2 sites, No reported glycans"/>
</dbReference>
<dbReference type="DNASU" id="735056"/>
<dbReference type="GeneID" id="735056"/>
<dbReference type="KEGG" id="xla:735056"/>
<dbReference type="AGR" id="Xenbase:XB-GENE-1007252"/>
<dbReference type="CTD" id="735056"/>
<dbReference type="Xenbase" id="XB-GENE-1007252">
    <property type="gene designation" value="gpr180.S"/>
</dbReference>
<dbReference type="OMA" id="YGEWDYA"/>
<dbReference type="OrthoDB" id="45670at2759"/>
<dbReference type="Proteomes" id="UP000186698">
    <property type="component" value="Chromosome 2S"/>
</dbReference>
<dbReference type="Bgee" id="735056">
    <property type="expression patterns" value="Expressed in liver and 19 other cell types or tissues"/>
</dbReference>
<dbReference type="GO" id="GO:0016020">
    <property type="term" value="C:membrane"/>
    <property type="evidence" value="ECO:0007669"/>
    <property type="project" value="UniProtKB-SubCell"/>
</dbReference>
<dbReference type="GO" id="GO:0007186">
    <property type="term" value="P:G protein-coupled receptor signaling pathway"/>
    <property type="evidence" value="ECO:0007669"/>
    <property type="project" value="InterPro"/>
</dbReference>
<dbReference type="GO" id="GO:0019236">
    <property type="term" value="P:response to pheromone"/>
    <property type="evidence" value="ECO:0007669"/>
    <property type="project" value="InterPro"/>
</dbReference>
<dbReference type="InterPro" id="IPR053880">
    <property type="entry name" value="GPR180-like_N"/>
</dbReference>
<dbReference type="InterPro" id="IPR047831">
    <property type="entry name" value="GPR180/TMEM145"/>
</dbReference>
<dbReference type="InterPro" id="IPR019336">
    <property type="entry name" value="GPR180/TMEM145_TM"/>
</dbReference>
<dbReference type="PANTHER" id="PTHR23252:SF29">
    <property type="entry name" value="INTEGRAL MEMBRANE PROTEIN GPR180"/>
    <property type="match status" value="1"/>
</dbReference>
<dbReference type="PANTHER" id="PTHR23252">
    <property type="entry name" value="INTIMAL THICKNESS RECEPTOR-RELATED"/>
    <property type="match status" value="1"/>
</dbReference>
<dbReference type="Pfam" id="PF21870">
    <property type="entry name" value="GP180_GOLD"/>
    <property type="match status" value="1"/>
</dbReference>
<dbReference type="Pfam" id="PF10192">
    <property type="entry name" value="GPR180-TMEM145_TM"/>
    <property type="match status" value="1"/>
</dbReference>
<sequence>MLWSLFVVLQLVHTGRARTVHGSLDSDVAWHGRGQHIVTFLFHGDQAVLRVKINNVAAAAGKESALYLYQDEQWVQIHSSLEEYSCPERLSLAQDTIPLNQTEYNYTLPQMAYPKAWYVIYVDKFTCLVKYEDQKSDAITFEVAMLNPDAAGNPFDHFGADESGLHEFFFLLVLIYFVAACIYIQALWQMMKKGGPMHTVLKVLSTALLLQVVSALANYLHLSRYATDGKGAPLVGSLAELCDIASEVQMLYLLLSLCMGWTLSRKKKSQGKPLQWDRTPASTGIAVLAVSAQVILLVWELFEDANHHSFHAHQSLAENLLIAMKICLAISLACGLYQIITVERSTMKRQFYITFAKGCFLWFLCHPCFVAISFLFKEYQREKVITVGVIVSQSVSMIILYRLFLSHSLYWEVSSLSSVTLPLTVSSGHRSRYYS</sequence>
<name>GP180_XENLA</name>
<keyword id="KW-0325">Glycoprotein</keyword>
<keyword id="KW-0472">Membrane</keyword>
<keyword id="KW-1185">Reference proteome</keyword>
<keyword id="KW-0732">Signal</keyword>
<keyword id="KW-0812">Transmembrane</keyword>
<keyword id="KW-1133">Transmembrane helix</keyword>
<proteinExistence type="evidence at transcript level"/>